<sequence>MKKELLKILREKKPLVHHITNIVTVNDCANITLAIGALPVMAHALEEVEEMVSAADALVLNIGTLTNEQVEAMIKAGKAANRLKVPVILDPVGAGATKLRTQSSKKILEEVKISVIKGNSAEISILAGKGGKIRGVESQSGADDISEAAKDLANAYNVVVAVSGVTDIITDGKRIAYVKNGHPMMGTVTGTGCMLTSVVASFCGVCEDYFAATVEAFVAFGIAGERAAQSSNVKGPGSFKVTFFDEIYNLTPEIIEKDKKVEYE</sequence>
<proteinExistence type="inferred from homology"/>
<comment type="function">
    <text evidence="1">Catalyzes the phosphorylation of the hydroxyl group of 4-methyl-5-beta-hydroxyethylthiazole (THZ).</text>
</comment>
<comment type="catalytic activity">
    <reaction evidence="1">
        <text>5-(2-hydroxyethyl)-4-methylthiazole + ATP = 4-methyl-5-(2-phosphooxyethyl)-thiazole + ADP + H(+)</text>
        <dbReference type="Rhea" id="RHEA:24212"/>
        <dbReference type="ChEBI" id="CHEBI:15378"/>
        <dbReference type="ChEBI" id="CHEBI:17957"/>
        <dbReference type="ChEBI" id="CHEBI:30616"/>
        <dbReference type="ChEBI" id="CHEBI:58296"/>
        <dbReference type="ChEBI" id="CHEBI:456216"/>
        <dbReference type="EC" id="2.7.1.50"/>
    </reaction>
</comment>
<comment type="cofactor">
    <cofactor evidence="1">
        <name>Mg(2+)</name>
        <dbReference type="ChEBI" id="CHEBI:18420"/>
    </cofactor>
</comment>
<comment type="pathway">
    <text evidence="1">Cofactor biosynthesis; thiamine diphosphate biosynthesis; 4-methyl-5-(2-phosphoethyl)-thiazole from 5-(2-hydroxyethyl)-4-methylthiazole: step 1/1.</text>
</comment>
<comment type="similarity">
    <text evidence="1">Belongs to the Thz kinase family.</text>
</comment>
<feature type="chain" id="PRO_1000100429" description="Hydroxyethylthiazole kinase">
    <location>
        <begin position="1"/>
        <end position="264"/>
    </location>
</feature>
<feature type="binding site" evidence="1">
    <location>
        <position position="41"/>
    </location>
    <ligand>
        <name>substrate</name>
    </ligand>
</feature>
<feature type="binding site" evidence="1">
    <location>
        <position position="117"/>
    </location>
    <ligand>
        <name>ATP</name>
        <dbReference type="ChEBI" id="CHEBI:30616"/>
    </ligand>
</feature>
<feature type="binding site" evidence="1">
    <location>
        <position position="163"/>
    </location>
    <ligand>
        <name>ATP</name>
        <dbReference type="ChEBI" id="CHEBI:30616"/>
    </ligand>
</feature>
<feature type="binding site" evidence="1">
    <location>
        <position position="190"/>
    </location>
    <ligand>
        <name>substrate</name>
    </ligand>
</feature>
<keyword id="KW-0067">ATP-binding</keyword>
<keyword id="KW-0418">Kinase</keyword>
<keyword id="KW-0460">Magnesium</keyword>
<keyword id="KW-0479">Metal-binding</keyword>
<keyword id="KW-0547">Nucleotide-binding</keyword>
<keyword id="KW-1185">Reference proteome</keyword>
<keyword id="KW-0784">Thiamine biosynthesis</keyword>
<keyword id="KW-0808">Transferase</keyword>
<gene>
    <name evidence="1" type="primary">thiM</name>
    <name type="ordered locus">Teth39_1654</name>
</gene>
<evidence type="ECO:0000255" key="1">
    <source>
        <dbReference type="HAMAP-Rule" id="MF_00228"/>
    </source>
</evidence>
<dbReference type="EC" id="2.7.1.50" evidence="1"/>
<dbReference type="EMBL" id="CP000924">
    <property type="protein sequence ID" value="ABY95295.1"/>
    <property type="molecule type" value="Genomic_DNA"/>
</dbReference>
<dbReference type="RefSeq" id="WP_003870579.1">
    <property type="nucleotide sequence ID" value="NC_010321.1"/>
</dbReference>
<dbReference type="SMR" id="B0KBA7"/>
<dbReference type="STRING" id="340099.Teth39_1654"/>
<dbReference type="KEGG" id="tpd:Teth39_1654"/>
<dbReference type="eggNOG" id="COG2145">
    <property type="taxonomic scope" value="Bacteria"/>
</dbReference>
<dbReference type="HOGENOM" id="CLU_019943_0_0_9"/>
<dbReference type="UniPathway" id="UPA00060">
    <property type="reaction ID" value="UER00139"/>
</dbReference>
<dbReference type="Proteomes" id="UP000002156">
    <property type="component" value="Chromosome"/>
</dbReference>
<dbReference type="GO" id="GO:0005524">
    <property type="term" value="F:ATP binding"/>
    <property type="evidence" value="ECO:0007669"/>
    <property type="project" value="UniProtKB-UniRule"/>
</dbReference>
<dbReference type="GO" id="GO:0004417">
    <property type="term" value="F:hydroxyethylthiazole kinase activity"/>
    <property type="evidence" value="ECO:0007669"/>
    <property type="project" value="UniProtKB-UniRule"/>
</dbReference>
<dbReference type="GO" id="GO:0000287">
    <property type="term" value="F:magnesium ion binding"/>
    <property type="evidence" value="ECO:0007669"/>
    <property type="project" value="UniProtKB-UniRule"/>
</dbReference>
<dbReference type="GO" id="GO:0009228">
    <property type="term" value="P:thiamine biosynthetic process"/>
    <property type="evidence" value="ECO:0007669"/>
    <property type="project" value="UniProtKB-KW"/>
</dbReference>
<dbReference type="GO" id="GO:0009229">
    <property type="term" value="P:thiamine diphosphate biosynthetic process"/>
    <property type="evidence" value="ECO:0007669"/>
    <property type="project" value="UniProtKB-UniRule"/>
</dbReference>
<dbReference type="CDD" id="cd01170">
    <property type="entry name" value="THZ_kinase"/>
    <property type="match status" value="1"/>
</dbReference>
<dbReference type="Gene3D" id="3.40.1190.20">
    <property type="match status" value="1"/>
</dbReference>
<dbReference type="HAMAP" id="MF_00228">
    <property type="entry name" value="Thz_kinase"/>
    <property type="match status" value="1"/>
</dbReference>
<dbReference type="InterPro" id="IPR000417">
    <property type="entry name" value="Hyethyz_kinase"/>
</dbReference>
<dbReference type="InterPro" id="IPR029056">
    <property type="entry name" value="Ribokinase-like"/>
</dbReference>
<dbReference type="NCBIfam" id="NF006830">
    <property type="entry name" value="PRK09355.1"/>
    <property type="match status" value="1"/>
</dbReference>
<dbReference type="NCBIfam" id="TIGR00694">
    <property type="entry name" value="thiM"/>
    <property type="match status" value="1"/>
</dbReference>
<dbReference type="Pfam" id="PF02110">
    <property type="entry name" value="HK"/>
    <property type="match status" value="1"/>
</dbReference>
<dbReference type="PIRSF" id="PIRSF000513">
    <property type="entry name" value="Thz_kinase"/>
    <property type="match status" value="1"/>
</dbReference>
<dbReference type="PRINTS" id="PR01099">
    <property type="entry name" value="HYETHTZKNASE"/>
</dbReference>
<dbReference type="SUPFAM" id="SSF53613">
    <property type="entry name" value="Ribokinase-like"/>
    <property type="match status" value="1"/>
</dbReference>
<name>THIM_THEP3</name>
<organism>
    <name type="scientific">Thermoanaerobacter pseudethanolicus (strain ATCC 33223 / 39E)</name>
    <name type="common">Clostridium thermohydrosulfuricum</name>
    <dbReference type="NCBI Taxonomy" id="340099"/>
    <lineage>
        <taxon>Bacteria</taxon>
        <taxon>Bacillati</taxon>
        <taxon>Bacillota</taxon>
        <taxon>Clostridia</taxon>
        <taxon>Thermoanaerobacterales</taxon>
        <taxon>Thermoanaerobacteraceae</taxon>
        <taxon>Thermoanaerobacter</taxon>
    </lineage>
</organism>
<protein>
    <recommendedName>
        <fullName evidence="1">Hydroxyethylthiazole kinase</fullName>
        <ecNumber evidence="1">2.7.1.50</ecNumber>
    </recommendedName>
    <alternativeName>
        <fullName evidence="1">4-methyl-5-beta-hydroxyethylthiazole kinase</fullName>
        <shortName evidence="1">TH kinase</shortName>
        <shortName evidence="1">Thz kinase</shortName>
    </alternativeName>
</protein>
<accession>B0KBA7</accession>
<reference key="1">
    <citation type="submission" date="2008-01" db="EMBL/GenBank/DDBJ databases">
        <title>Complete sequence of Thermoanaerobacter pseudethanolicus 39E.</title>
        <authorList>
            <person name="Copeland A."/>
            <person name="Lucas S."/>
            <person name="Lapidus A."/>
            <person name="Barry K."/>
            <person name="Glavina del Rio T."/>
            <person name="Dalin E."/>
            <person name="Tice H."/>
            <person name="Pitluck S."/>
            <person name="Bruce D."/>
            <person name="Goodwin L."/>
            <person name="Saunders E."/>
            <person name="Brettin T."/>
            <person name="Detter J.C."/>
            <person name="Han C."/>
            <person name="Schmutz J."/>
            <person name="Larimer F."/>
            <person name="Land M."/>
            <person name="Hauser L."/>
            <person name="Kyrpides N."/>
            <person name="Lykidis A."/>
            <person name="Hemme C."/>
            <person name="Fields M.W."/>
            <person name="He Z."/>
            <person name="Zhou J."/>
            <person name="Richardson P."/>
        </authorList>
    </citation>
    <scope>NUCLEOTIDE SEQUENCE [LARGE SCALE GENOMIC DNA]</scope>
    <source>
        <strain>ATCC 33223 / DSM 2355 / 39E</strain>
    </source>
</reference>